<evidence type="ECO:0000255" key="1">
    <source>
        <dbReference type="HAMAP-Rule" id="MF_00270"/>
    </source>
</evidence>
<evidence type="ECO:0000305" key="2"/>
<comment type="function">
    <text evidence="1">Binds as a heterodimer with protein bS6 to the central domain of the 16S rRNA, where it helps stabilize the platform of the 30S subunit.</text>
</comment>
<comment type="subunit">
    <text evidence="1">Part of the 30S ribosomal subunit. Forms a tight heterodimer with protein bS6.</text>
</comment>
<comment type="similarity">
    <text evidence="1">Belongs to the bacterial ribosomal protein bS18 family.</text>
</comment>
<keyword id="KW-1185">Reference proteome</keyword>
<keyword id="KW-0687">Ribonucleoprotein</keyword>
<keyword id="KW-0689">Ribosomal protein</keyword>
<keyword id="KW-0694">RNA-binding</keyword>
<keyword id="KW-0699">rRNA-binding</keyword>
<protein>
    <recommendedName>
        <fullName evidence="1">Small ribosomal subunit protein bS18</fullName>
    </recommendedName>
    <alternativeName>
        <fullName evidence="2">30S ribosomal protein S18</fullName>
    </alternativeName>
</protein>
<proteinExistence type="inferred from homology"/>
<organism>
    <name type="scientific">Teredinibacter turnerae (strain ATCC 39867 / T7901)</name>
    <dbReference type="NCBI Taxonomy" id="377629"/>
    <lineage>
        <taxon>Bacteria</taxon>
        <taxon>Pseudomonadati</taxon>
        <taxon>Pseudomonadota</taxon>
        <taxon>Gammaproteobacteria</taxon>
        <taxon>Cellvibrionales</taxon>
        <taxon>Cellvibrionaceae</taxon>
        <taxon>Teredinibacter</taxon>
    </lineage>
</organism>
<sequence>MSRFFRRRKFCRFTAEGVKQIDYKDLETLKAYISETGKIVPSRITGTKAKYQRQLATAVKRARYLALLPYTDSHE</sequence>
<feature type="chain" id="PRO_1000204738" description="Small ribosomal subunit protein bS18">
    <location>
        <begin position="1"/>
        <end position="75"/>
    </location>
</feature>
<gene>
    <name evidence="1" type="primary">rpsR</name>
    <name type="ordered locus">TERTU_0548</name>
</gene>
<accession>C5BN46</accession>
<name>RS18_TERTT</name>
<dbReference type="EMBL" id="CP001614">
    <property type="protein sequence ID" value="ACR10830.1"/>
    <property type="molecule type" value="Genomic_DNA"/>
</dbReference>
<dbReference type="RefSeq" id="WP_015816942.1">
    <property type="nucleotide sequence ID" value="NC_012997.1"/>
</dbReference>
<dbReference type="SMR" id="C5BN46"/>
<dbReference type="STRING" id="377629.TERTU_0548"/>
<dbReference type="GeneID" id="58408374"/>
<dbReference type="GeneID" id="93858058"/>
<dbReference type="KEGG" id="ttu:TERTU_0548"/>
<dbReference type="eggNOG" id="COG0238">
    <property type="taxonomic scope" value="Bacteria"/>
</dbReference>
<dbReference type="HOGENOM" id="CLU_148710_2_3_6"/>
<dbReference type="OrthoDB" id="9812008at2"/>
<dbReference type="Proteomes" id="UP000009080">
    <property type="component" value="Chromosome"/>
</dbReference>
<dbReference type="GO" id="GO:0022627">
    <property type="term" value="C:cytosolic small ribosomal subunit"/>
    <property type="evidence" value="ECO:0007669"/>
    <property type="project" value="TreeGrafter"/>
</dbReference>
<dbReference type="GO" id="GO:0070181">
    <property type="term" value="F:small ribosomal subunit rRNA binding"/>
    <property type="evidence" value="ECO:0007669"/>
    <property type="project" value="TreeGrafter"/>
</dbReference>
<dbReference type="GO" id="GO:0003735">
    <property type="term" value="F:structural constituent of ribosome"/>
    <property type="evidence" value="ECO:0007669"/>
    <property type="project" value="InterPro"/>
</dbReference>
<dbReference type="GO" id="GO:0006412">
    <property type="term" value="P:translation"/>
    <property type="evidence" value="ECO:0007669"/>
    <property type="project" value="UniProtKB-UniRule"/>
</dbReference>
<dbReference type="FunFam" id="4.10.640.10:FF:000001">
    <property type="entry name" value="30S ribosomal protein S18"/>
    <property type="match status" value="1"/>
</dbReference>
<dbReference type="Gene3D" id="4.10.640.10">
    <property type="entry name" value="Ribosomal protein S18"/>
    <property type="match status" value="1"/>
</dbReference>
<dbReference type="HAMAP" id="MF_00270">
    <property type="entry name" value="Ribosomal_bS18"/>
    <property type="match status" value="1"/>
</dbReference>
<dbReference type="InterPro" id="IPR001648">
    <property type="entry name" value="Ribosomal_bS18"/>
</dbReference>
<dbReference type="InterPro" id="IPR018275">
    <property type="entry name" value="Ribosomal_bS18_CS"/>
</dbReference>
<dbReference type="InterPro" id="IPR036870">
    <property type="entry name" value="Ribosomal_bS18_sf"/>
</dbReference>
<dbReference type="NCBIfam" id="TIGR00165">
    <property type="entry name" value="S18"/>
    <property type="match status" value="1"/>
</dbReference>
<dbReference type="PANTHER" id="PTHR13479">
    <property type="entry name" value="30S RIBOSOMAL PROTEIN S18"/>
    <property type="match status" value="1"/>
</dbReference>
<dbReference type="PANTHER" id="PTHR13479:SF40">
    <property type="entry name" value="SMALL RIBOSOMAL SUBUNIT PROTEIN BS18M"/>
    <property type="match status" value="1"/>
</dbReference>
<dbReference type="Pfam" id="PF01084">
    <property type="entry name" value="Ribosomal_S18"/>
    <property type="match status" value="1"/>
</dbReference>
<dbReference type="PRINTS" id="PR00974">
    <property type="entry name" value="RIBOSOMALS18"/>
</dbReference>
<dbReference type="SUPFAM" id="SSF46911">
    <property type="entry name" value="Ribosomal protein S18"/>
    <property type="match status" value="1"/>
</dbReference>
<dbReference type="PROSITE" id="PS00057">
    <property type="entry name" value="RIBOSOMAL_S18"/>
    <property type="match status" value="1"/>
</dbReference>
<reference key="1">
    <citation type="journal article" date="2009" name="PLoS ONE">
        <title>The complete genome of Teredinibacter turnerae T7901: an intracellular endosymbiont of marine wood-boring bivalves (shipworms).</title>
        <authorList>
            <person name="Yang J.C."/>
            <person name="Madupu R."/>
            <person name="Durkin A.S."/>
            <person name="Ekborg N.A."/>
            <person name="Pedamallu C.S."/>
            <person name="Hostetler J.B."/>
            <person name="Radune D."/>
            <person name="Toms B.S."/>
            <person name="Henrissat B."/>
            <person name="Coutinho P.M."/>
            <person name="Schwarz S."/>
            <person name="Field L."/>
            <person name="Trindade-Silva A.E."/>
            <person name="Soares C.A.G."/>
            <person name="Elshahawi S."/>
            <person name="Hanora A."/>
            <person name="Schmidt E.W."/>
            <person name="Haygood M.G."/>
            <person name="Posfai J."/>
            <person name="Benner J."/>
            <person name="Madinger C."/>
            <person name="Nove J."/>
            <person name="Anton B."/>
            <person name="Chaudhary K."/>
            <person name="Foster J."/>
            <person name="Holman A."/>
            <person name="Kumar S."/>
            <person name="Lessard P.A."/>
            <person name="Luyten Y.A."/>
            <person name="Slatko B."/>
            <person name="Wood N."/>
            <person name="Wu B."/>
            <person name="Teplitski M."/>
            <person name="Mougous J.D."/>
            <person name="Ward N."/>
            <person name="Eisen J.A."/>
            <person name="Badger J.H."/>
            <person name="Distel D.L."/>
        </authorList>
    </citation>
    <scope>NUCLEOTIDE SEQUENCE [LARGE SCALE GENOMIC DNA]</scope>
    <source>
        <strain>ATCC 39867 / T7901</strain>
    </source>
</reference>